<name>RNZ_THEVB</name>
<sequence>MEITFLGTSSGVPTRTRNVSSVALRLPQRKEIWLFDCGEATQHQLLRSDLRTSQIRRIFITHMHGDHIFGLMGLLASCGLAGTVSQIDVYGPPTLDRYIASCLRWSVMRLPYKLQVHTVEPGEVFSDGEFTVTCRLLHHRVPAFGYRVTEGDRPGRFHVEKAQALGIPFGPLYGQLKQGKTITLEDGRTFDGRDFCDPPQRGRSMVYCTDTVFCDSAVELAQQADVLIHEATFSHQEANLAFARLHSTSTMAAQVAAFAQVKLLFLTHFSARYAPGNPVQVEDLLAEAQAIFPNTRLAQDFLHYAIPRDGQICAEMPPSDSPAAANIDTLEATLEPLEAQTVAADAKNAPAIAINRATRQQMQQKLGIDATTANAILERRRQQKFTCLGELERLYPQVDWSALNVLF</sequence>
<feature type="chain" id="PRO_0000155914" description="Ribonuclease Z">
    <location>
        <begin position="1"/>
        <end position="407"/>
    </location>
</feature>
<feature type="region of interest" description="Ribonuclease Z">
    <location>
        <begin position="1"/>
        <end position="308"/>
    </location>
</feature>
<feature type="region of interest" description="Unknown">
    <location>
        <begin position="309"/>
        <end position="407"/>
    </location>
</feature>
<feature type="active site" description="Proton acceptor" evidence="2">
    <location>
        <position position="66"/>
    </location>
</feature>
<feature type="binding site" evidence="1">
    <location>
        <position position="62"/>
    </location>
    <ligand>
        <name>Zn(2+)</name>
        <dbReference type="ChEBI" id="CHEBI:29105"/>
        <label>1</label>
        <note>catalytic</note>
    </ligand>
</feature>
<feature type="binding site" evidence="1">
    <location>
        <position position="64"/>
    </location>
    <ligand>
        <name>Zn(2+)</name>
        <dbReference type="ChEBI" id="CHEBI:29105"/>
        <label>1</label>
        <note>catalytic</note>
    </ligand>
</feature>
<feature type="binding site" evidence="1">
    <location>
        <position position="66"/>
    </location>
    <ligand>
        <name>Zn(2+)</name>
        <dbReference type="ChEBI" id="CHEBI:29105"/>
        <label>2</label>
        <note>catalytic</note>
    </ligand>
</feature>
<feature type="binding site" evidence="1">
    <location>
        <position position="67"/>
    </location>
    <ligand>
        <name>Zn(2+)</name>
        <dbReference type="ChEBI" id="CHEBI:29105"/>
        <label>2</label>
        <note>catalytic</note>
    </ligand>
</feature>
<feature type="binding site" evidence="1">
    <location>
        <position position="139"/>
    </location>
    <ligand>
        <name>Zn(2+)</name>
        <dbReference type="ChEBI" id="CHEBI:29105"/>
        <label>1</label>
        <note>catalytic</note>
    </ligand>
</feature>
<feature type="binding site" evidence="1">
    <location>
        <position position="210"/>
    </location>
    <ligand>
        <name>Zn(2+)</name>
        <dbReference type="ChEBI" id="CHEBI:29105"/>
        <label>1</label>
        <note>catalytic</note>
    </ligand>
</feature>
<feature type="binding site" evidence="1">
    <location>
        <position position="210"/>
    </location>
    <ligand>
        <name>Zn(2+)</name>
        <dbReference type="ChEBI" id="CHEBI:29105"/>
        <label>2</label>
        <note>catalytic</note>
    </ligand>
</feature>
<feature type="binding site" evidence="1">
    <location>
        <position position="268"/>
    </location>
    <ligand>
        <name>Zn(2+)</name>
        <dbReference type="ChEBI" id="CHEBI:29105"/>
        <label>2</label>
        <note>catalytic</note>
    </ligand>
</feature>
<gene>
    <name type="primary">rnz</name>
    <name type="ordered locus">tll0915</name>
</gene>
<comment type="function">
    <text evidence="1">Zinc phosphodiesterase, which displays some tRNA 3'-processing endonuclease activity. Probably involved in tRNA maturation, by removing a 3'-trailer from precursor tRNA (By similarity).</text>
</comment>
<comment type="catalytic activity">
    <reaction>
        <text>Endonucleolytic cleavage of RNA, removing extra 3' nucleotides from tRNA precursor, generating 3' termini of tRNAs. A 3'-hydroxy group is left at the tRNA terminus and a 5'-phosphoryl group is left at the trailer molecule.</text>
        <dbReference type="EC" id="3.1.26.11"/>
    </reaction>
</comment>
<comment type="cofactor">
    <cofactor evidence="1">
        <name>Zn(2+)</name>
        <dbReference type="ChEBI" id="CHEBI:29105"/>
    </cofactor>
    <text evidence="1">Binds 2 Zn(2+) ions.</text>
</comment>
<comment type="subunit">
    <text evidence="1">Homodimer.</text>
</comment>
<comment type="similarity">
    <text evidence="3">Belongs to the RNase Z family.</text>
</comment>
<accession>Q8DKE4</accession>
<keyword id="KW-0255">Endonuclease</keyword>
<keyword id="KW-0378">Hydrolase</keyword>
<keyword id="KW-0479">Metal-binding</keyword>
<keyword id="KW-0540">Nuclease</keyword>
<keyword id="KW-1185">Reference proteome</keyword>
<keyword id="KW-0819">tRNA processing</keyword>
<keyword id="KW-0862">Zinc</keyword>
<dbReference type="EC" id="3.1.26.11"/>
<dbReference type="EMBL" id="BA000039">
    <property type="protein sequence ID" value="BAC08467.1"/>
    <property type="molecule type" value="Genomic_DNA"/>
</dbReference>
<dbReference type="RefSeq" id="NP_681705.1">
    <property type="nucleotide sequence ID" value="NC_004113.1"/>
</dbReference>
<dbReference type="RefSeq" id="WP_011056759.1">
    <property type="nucleotide sequence ID" value="NC_004113.1"/>
</dbReference>
<dbReference type="SMR" id="Q8DKE4"/>
<dbReference type="STRING" id="197221.gene:10747507"/>
<dbReference type="EnsemblBacteria" id="BAC08467">
    <property type="protein sequence ID" value="BAC08467"/>
    <property type="gene ID" value="BAC08467"/>
</dbReference>
<dbReference type="KEGG" id="tel:tll0915"/>
<dbReference type="PATRIC" id="fig|197221.4.peg.960"/>
<dbReference type="eggNOG" id="COG1234">
    <property type="taxonomic scope" value="Bacteria"/>
</dbReference>
<dbReference type="eggNOG" id="COG1555">
    <property type="taxonomic scope" value="Bacteria"/>
</dbReference>
<dbReference type="Proteomes" id="UP000000440">
    <property type="component" value="Chromosome"/>
</dbReference>
<dbReference type="GO" id="GO:0042781">
    <property type="term" value="F:3'-tRNA processing endoribonuclease activity"/>
    <property type="evidence" value="ECO:0007669"/>
    <property type="project" value="UniProtKB-UniRule"/>
</dbReference>
<dbReference type="GO" id="GO:0008270">
    <property type="term" value="F:zinc ion binding"/>
    <property type="evidence" value="ECO:0007669"/>
    <property type="project" value="UniProtKB-UniRule"/>
</dbReference>
<dbReference type="CDD" id="cd07717">
    <property type="entry name" value="RNaseZ_ZiPD-like_MBL-fold"/>
    <property type="match status" value="1"/>
</dbReference>
<dbReference type="FunFam" id="3.60.15.10:FF:000002">
    <property type="entry name" value="Ribonuclease Z"/>
    <property type="match status" value="1"/>
</dbReference>
<dbReference type="Gene3D" id="3.60.15.10">
    <property type="entry name" value="Ribonuclease Z/Hydroxyacylglutathione hydrolase-like"/>
    <property type="match status" value="1"/>
</dbReference>
<dbReference type="HAMAP" id="MF_01818">
    <property type="entry name" value="RNase_Z_BN"/>
    <property type="match status" value="1"/>
</dbReference>
<dbReference type="InterPro" id="IPR001279">
    <property type="entry name" value="Metallo-B-lactamas"/>
</dbReference>
<dbReference type="InterPro" id="IPR036866">
    <property type="entry name" value="RibonucZ/Hydroxyglut_hydro"/>
</dbReference>
<dbReference type="InterPro" id="IPR013471">
    <property type="entry name" value="RNase_Z/BN"/>
</dbReference>
<dbReference type="InterPro" id="IPR010994">
    <property type="entry name" value="RuvA_2-like"/>
</dbReference>
<dbReference type="NCBIfam" id="NF000801">
    <property type="entry name" value="PRK00055.1-3"/>
    <property type="match status" value="1"/>
</dbReference>
<dbReference type="NCBIfam" id="TIGR02651">
    <property type="entry name" value="RNase_Z"/>
    <property type="match status" value="1"/>
</dbReference>
<dbReference type="PANTHER" id="PTHR46018">
    <property type="entry name" value="ZINC PHOSPHODIESTERASE ELAC PROTEIN 1"/>
    <property type="match status" value="1"/>
</dbReference>
<dbReference type="PANTHER" id="PTHR46018:SF2">
    <property type="entry name" value="ZINC PHOSPHODIESTERASE ELAC PROTEIN 1"/>
    <property type="match status" value="1"/>
</dbReference>
<dbReference type="Pfam" id="PF12706">
    <property type="entry name" value="Lactamase_B_2"/>
    <property type="match status" value="1"/>
</dbReference>
<dbReference type="SUPFAM" id="SSF56281">
    <property type="entry name" value="Metallo-hydrolase/oxidoreductase"/>
    <property type="match status" value="1"/>
</dbReference>
<dbReference type="SUPFAM" id="SSF47781">
    <property type="entry name" value="RuvA domain 2-like"/>
    <property type="match status" value="1"/>
</dbReference>
<evidence type="ECO:0000250" key="1"/>
<evidence type="ECO:0000255" key="2"/>
<evidence type="ECO:0000305" key="3"/>
<protein>
    <recommendedName>
        <fullName>Ribonuclease Z</fullName>
        <shortName>RNase Z</shortName>
        <ecNumber>3.1.26.11</ecNumber>
    </recommendedName>
    <alternativeName>
        <fullName>tRNA 3 endonuclease</fullName>
    </alternativeName>
    <alternativeName>
        <fullName>tRNase Z</fullName>
    </alternativeName>
</protein>
<proteinExistence type="inferred from homology"/>
<organism>
    <name type="scientific">Thermosynechococcus vestitus (strain NIES-2133 / IAM M-273 / BP-1)</name>
    <dbReference type="NCBI Taxonomy" id="197221"/>
    <lineage>
        <taxon>Bacteria</taxon>
        <taxon>Bacillati</taxon>
        <taxon>Cyanobacteriota</taxon>
        <taxon>Cyanophyceae</taxon>
        <taxon>Acaryochloridales</taxon>
        <taxon>Thermosynechococcaceae</taxon>
        <taxon>Thermosynechococcus</taxon>
    </lineage>
</organism>
<reference key="1">
    <citation type="journal article" date="2002" name="DNA Res.">
        <title>Complete genome structure of the thermophilic cyanobacterium Thermosynechococcus elongatus BP-1.</title>
        <authorList>
            <person name="Nakamura Y."/>
            <person name="Kaneko T."/>
            <person name="Sato S."/>
            <person name="Ikeuchi M."/>
            <person name="Katoh H."/>
            <person name="Sasamoto S."/>
            <person name="Watanabe A."/>
            <person name="Iriguchi M."/>
            <person name="Kawashima K."/>
            <person name="Kimura T."/>
            <person name="Kishida Y."/>
            <person name="Kiyokawa C."/>
            <person name="Kohara M."/>
            <person name="Matsumoto M."/>
            <person name="Matsuno A."/>
            <person name="Nakazaki N."/>
            <person name="Shimpo S."/>
            <person name="Sugimoto M."/>
            <person name="Takeuchi C."/>
            <person name="Yamada M."/>
            <person name="Tabata S."/>
        </authorList>
    </citation>
    <scope>NUCLEOTIDE SEQUENCE [LARGE SCALE GENOMIC DNA]</scope>
    <source>
        <strain>NIES-2133 / IAM M-273 / BP-1</strain>
    </source>
</reference>